<gene>
    <name type="primary">irag2</name>
    <name type="synonym">lrmp</name>
    <name type="ORF">si:dkey-172o10.4</name>
</gene>
<organism>
    <name type="scientific">Danio rerio</name>
    <name type="common">Zebrafish</name>
    <name type="synonym">Brachydanio rerio</name>
    <dbReference type="NCBI Taxonomy" id="7955"/>
    <lineage>
        <taxon>Eukaryota</taxon>
        <taxon>Metazoa</taxon>
        <taxon>Chordata</taxon>
        <taxon>Craniata</taxon>
        <taxon>Vertebrata</taxon>
        <taxon>Euteleostomi</taxon>
        <taxon>Actinopterygii</taxon>
        <taxon>Neopterygii</taxon>
        <taxon>Teleostei</taxon>
        <taxon>Ostariophysi</taxon>
        <taxon>Cypriniformes</taxon>
        <taxon>Danionidae</taxon>
        <taxon>Danioninae</taxon>
        <taxon>Danio</taxon>
    </lineage>
</organism>
<proteinExistence type="evidence at protein level"/>
<keyword id="KW-0025">Alternative splicing</keyword>
<keyword id="KW-0158">Chromosome</keyword>
<keyword id="KW-0175">Coiled coil</keyword>
<keyword id="KW-0963">Cytoplasm</keyword>
<keyword id="KW-0206">Cytoskeleton</keyword>
<keyword id="KW-0256">Endoplasmic reticulum</keyword>
<keyword id="KW-0278">Fertilization</keyword>
<keyword id="KW-0472">Membrane</keyword>
<keyword id="KW-0539">Nucleus</keyword>
<keyword id="KW-1185">Reference proteome</keyword>
<keyword id="KW-0812">Transmembrane</keyword>
<keyword id="KW-1133">Transmembrane helix</keyword>
<evidence type="ECO:0000255" key="1"/>
<evidence type="ECO:0000256" key="2">
    <source>
        <dbReference type="SAM" id="MobiDB-lite"/>
    </source>
</evidence>
<evidence type="ECO:0000269" key="3">
    <source>
    </source>
</evidence>
<evidence type="ECO:0000269" key="4">
    <source>
    </source>
</evidence>
<evidence type="ECO:0000303" key="5">
    <source>
    </source>
</evidence>
<evidence type="ECO:0000305" key="6"/>
<sequence>MDVGVTPRRHNPVDSICRKLQTIQRRDQEINSPFQIPKFQTNSYDSPHSGLRFNLEAILKKHTVRPDDSDSASSAGMLTPTASPGPGSSCNTPRAPITPVNATYSITSTLGTLGTIGDRRTSGTYSRPFRRNCSTPSAQTGDNYFNFTPRYSTQSQGPDTDVRTSKIPTPGLFSYNLNFSSDISNMDSELAYPALVVKRLSLGEGSLFTSEPKKESMAEVSLICEEDLLDTIFQACDTQCRGKVYVSHIVDFLRHTTCRSSEDSGLEELCNMLDPERKDISIDLDTYHAIMKEWIEDCRNQGKDLKNDTQQESSKLRDSLSAKRSALLNMTSGSLEAFGGEASRADLETSDLVFCVADLQLNNQKLQEEVRKLKQAVENMEDTNQKLIEENEELKTQAKMGQQLLQKEKMLKEEVEEMKLSLTSSEESRAQAAAQRKQMERENQSLISKIAALQEENMKVTLEAEELQKKMNDLCDLNADLQVQIHSFDAILADKESLIQEKNKQMDELKVAVVEYSSVTELLRADKNKLESQMQMMQPDVTIPGLSLSVAYRLNQTSSGSLQTELALAQNPLEGLEHLSTSVCFASSLDETLDREVLLLLQGPTPEQLSLEFKSLISRLKREFKEDGLTFLTAIRSLTENSETQEANTDLKMQGLEVQLEQRRTDWIRSLEQLDQYRDSLERELLKMASNMRRSRTEILHLSVKVQEQENQKQQLREEVDRLKTPLDNREASSQTPDHLQQVVEELDGPSLEWDEEYVLSESPPLQELGPDQQMLEELCCDEEVLQALKQEEEEPTETVSDKEKITAKSEGEGEATYDSGVENEEPQRDFTLSHMCLPDKKSERESNEAPFVGEGGEQRPCMSLKEEDRLPECTGPEDAHEQAAPLPHTHCECAGDQPLTYDNLEVTSVKDHILSTEPSSLMTCELVSPSTGHPEVGNSITGRTEQLVGTNGEPEEERLTTGADMSDLQRLGEGQLSKVSAKSDKSLLLPVAEEEEAMPEAVEVTSAGVNSPDKHKTGSKKTVVTSDSNSTGSADSLKDPSEKVKDMTFDPAASEDNIPTVPATQSPKKDPLASRNKLKKEMSSMEVIEEQKAQEDGEPTVVTEKEGDTSVSSENASDSTKDDKNSLSPSDKEIEAEFHRLSLGFKCDMFTLEKRLRLEERSRDLAEENVRKEVISCKALLQALIPRCEEDNQSMEIIHRVQKNLEILVQSMTRVSSRSEMLGAIHQETRVGKTVEVMIQHVENLRRMYTKEHAELLELRENLTPNERSFGSHSERDDFRNKKQTTSNIFKTTSRRISIATIPRSIGGQTHFDMPKDMAETEVERLSRRSPWNMAAKRPPLKRFVSSGTWADIDEPTLMNSPTPSPTDNAPPSLMEGRPAVSRGARGIWIWVALFVVLAVLLALLASLMLQPAVDAAPVGTGDSWMTIQQLLWPYTGLRHNGQPPV</sequence>
<accession>Q5RHB5</accession>
<accession>J9WMP5</accession>
<protein>
    <recommendedName>
        <fullName>Inositol 1,4,5-triphosphate receptor associated 2</fullName>
    </recommendedName>
    <alternativeName>
        <fullName>Lymphoid-restricted membrane protein</fullName>
    </alternativeName>
</protein>
<name>IRAG2_DANRE</name>
<reference key="1">
    <citation type="journal article" date="2012" name="Curr. Biol.">
        <title>Localized products of futile cycle/lrmp promote centrosome-nucleus attachment in the zebrafish zygote.</title>
        <authorList>
            <person name="Lindeman R.E."/>
            <person name="Pelegri F."/>
        </authorList>
    </citation>
    <scope>NUCLEOTIDE SEQUENCE [MRNA] (ISOFORMS 1 AND 2)</scope>
    <scope>FUNCTION</scope>
    <scope>SUBCELLULAR LOCATION</scope>
    <scope>DEVELOPMENTAL STAGE</scope>
</reference>
<reference key="2">
    <citation type="journal article" date="2013" name="Nature">
        <title>The zebrafish reference genome sequence and its relationship to the human genome.</title>
        <authorList>
            <person name="Howe K."/>
            <person name="Clark M.D."/>
            <person name="Torroja C.F."/>
            <person name="Torrance J."/>
            <person name="Berthelot C."/>
            <person name="Muffato M."/>
            <person name="Collins J.E."/>
            <person name="Humphray S."/>
            <person name="McLaren K."/>
            <person name="Matthews L."/>
            <person name="McLaren S."/>
            <person name="Sealy I."/>
            <person name="Caccamo M."/>
            <person name="Churcher C."/>
            <person name="Scott C."/>
            <person name="Barrett J.C."/>
            <person name="Koch R."/>
            <person name="Rauch G.J."/>
            <person name="White S."/>
            <person name="Chow W."/>
            <person name="Kilian B."/>
            <person name="Quintais L.T."/>
            <person name="Guerra-Assuncao J.A."/>
            <person name="Zhou Y."/>
            <person name="Gu Y."/>
            <person name="Yen J."/>
            <person name="Vogel J.H."/>
            <person name="Eyre T."/>
            <person name="Redmond S."/>
            <person name="Banerjee R."/>
            <person name="Chi J."/>
            <person name="Fu B."/>
            <person name="Langley E."/>
            <person name="Maguire S.F."/>
            <person name="Laird G.K."/>
            <person name="Lloyd D."/>
            <person name="Kenyon E."/>
            <person name="Donaldson S."/>
            <person name="Sehra H."/>
            <person name="Almeida-King J."/>
            <person name="Loveland J."/>
            <person name="Trevanion S."/>
            <person name="Jones M."/>
            <person name="Quail M."/>
            <person name="Willey D."/>
            <person name="Hunt A."/>
            <person name="Burton J."/>
            <person name="Sims S."/>
            <person name="McLay K."/>
            <person name="Plumb B."/>
            <person name="Davis J."/>
            <person name="Clee C."/>
            <person name="Oliver K."/>
            <person name="Clark R."/>
            <person name="Riddle C."/>
            <person name="Elliot D."/>
            <person name="Threadgold G."/>
            <person name="Harden G."/>
            <person name="Ware D."/>
            <person name="Begum S."/>
            <person name="Mortimore B."/>
            <person name="Kerry G."/>
            <person name="Heath P."/>
            <person name="Phillimore B."/>
            <person name="Tracey A."/>
            <person name="Corby N."/>
            <person name="Dunn M."/>
            <person name="Johnson C."/>
            <person name="Wood J."/>
            <person name="Clark S."/>
            <person name="Pelan S."/>
            <person name="Griffiths G."/>
            <person name="Smith M."/>
            <person name="Glithero R."/>
            <person name="Howden P."/>
            <person name="Barker N."/>
            <person name="Lloyd C."/>
            <person name="Stevens C."/>
            <person name="Harley J."/>
            <person name="Holt K."/>
            <person name="Panagiotidis G."/>
            <person name="Lovell J."/>
            <person name="Beasley H."/>
            <person name="Henderson C."/>
            <person name="Gordon D."/>
            <person name="Auger K."/>
            <person name="Wright D."/>
            <person name="Collins J."/>
            <person name="Raisen C."/>
            <person name="Dyer L."/>
            <person name="Leung K."/>
            <person name="Robertson L."/>
            <person name="Ambridge K."/>
            <person name="Leongamornlert D."/>
            <person name="McGuire S."/>
            <person name="Gilderthorp R."/>
            <person name="Griffiths C."/>
            <person name="Manthravadi D."/>
            <person name="Nichol S."/>
            <person name="Barker G."/>
            <person name="Whitehead S."/>
            <person name="Kay M."/>
            <person name="Brown J."/>
            <person name="Murnane C."/>
            <person name="Gray E."/>
            <person name="Humphries M."/>
            <person name="Sycamore N."/>
            <person name="Barker D."/>
            <person name="Saunders D."/>
            <person name="Wallis J."/>
            <person name="Babbage A."/>
            <person name="Hammond S."/>
            <person name="Mashreghi-Mohammadi M."/>
            <person name="Barr L."/>
            <person name="Martin S."/>
            <person name="Wray P."/>
            <person name="Ellington A."/>
            <person name="Matthews N."/>
            <person name="Ellwood M."/>
            <person name="Woodmansey R."/>
            <person name="Clark G."/>
            <person name="Cooper J."/>
            <person name="Tromans A."/>
            <person name="Grafham D."/>
            <person name="Skuce C."/>
            <person name="Pandian R."/>
            <person name="Andrews R."/>
            <person name="Harrison E."/>
            <person name="Kimberley A."/>
            <person name="Garnett J."/>
            <person name="Fosker N."/>
            <person name="Hall R."/>
            <person name="Garner P."/>
            <person name="Kelly D."/>
            <person name="Bird C."/>
            <person name="Palmer S."/>
            <person name="Gehring I."/>
            <person name="Berger A."/>
            <person name="Dooley C.M."/>
            <person name="Ersan-Urun Z."/>
            <person name="Eser C."/>
            <person name="Geiger H."/>
            <person name="Geisler M."/>
            <person name="Karotki L."/>
            <person name="Kirn A."/>
            <person name="Konantz J."/>
            <person name="Konantz M."/>
            <person name="Oberlander M."/>
            <person name="Rudolph-Geiger S."/>
            <person name="Teucke M."/>
            <person name="Lanz C."/>
            <person name="Raddatz G."/>
            <person name="Osoegawa K."/>
            <person name="Zhu B."/>
            <person name="Rapp A."/>
            <person name="Widaa S."/>
            <person name="Langford C."/>
            <person name="Yang F."/>
            <person name="Schuster S.C."/>
            <person name="Carter N.P."/>
            <person name="Harrow J."/>
            <person name="Ning Z."/>
            <person name="Herrero J."/>
            <person name="Searle S.M."/>
            <person name="Enright A."/>
            <person name="Geisler R."/>
            <person name="Plasterk R.H."/>
            <person name="Lee C."/>
            <person name="Westerfield M."/>
            <person name="de Jong P.J."/>
            <person name="Zon L.I."/>
            <person name="Postlethwait J.H."/>
            <person name="Nusslein-Volhard C."/>
            <person name="Hubbard T.J."/>
            <person name="Roest Crollius H."/>
            <person name="Rogers J."/>
            <person name="Stemple D.L."/>
        </authorList>
    </citation>
    <scope>NUCLEOTIDE SEQUENCE [LARGE SCALE GENOMIC DNA]</scope>
    <source>
        <strain>Tuebingen</strain>
    </source>
</reference>
<reference key="3">
    <citation type="journal article" date="2003" name="Development">
        <title>The maternal-effect gene futile cycle is essential for pronuclear congression and mitotic spindle assembly in the zebrafish zygote.</title>
        <authorList>
            <person name="Dekens M.P."/>
            <person name="Pelegri F.J."/>
            <person name="Maischein H.M."/>
            <person name="Nuesslein-Volhard C."/>
        </authorList>
    </citation>
    <scope>FUNCTION</scope>
    <scope>DISEASE</scope>
</reference>
<feature type="chain" id="PRO_0000425286" description="Inositol 1,4,5-triphosphate receptor associated 2">
    <location>
        <begin position="1"/>
        <end position="1447"/>
    </location>
</feature>
<feature type="topological domain" description="Cytoplasmic" evidence="1">
    <location>
        <begin position="1"/>
        <end position="1388"/>
    </location>
</feature>
<feature type="transmembrane region" description="Helical; Anchor for type IV membrane protein" evidence="1">
    <location>
        <begin position="1389"/>
        <end position="1409"/>
    </location>
</feature>
<feature type="topological domain" description="Lumenal" evidence="1">
    <location>
        <begin position="1410"/>
        <end position="1447"/>
    </location>
</feature>
<feature type="region of interest" description="Disordered" evidence="2">
    <location>
        <begin position="64"/>
        <end position="96"/>
    </location>
</feature>
<feature type="region of interest" description="Disordered" evidence="2">
    <location>
        <begin position="420"/>
        <end position="439"/>
    </location>
</feature>
<feature type="region of interest" description="Disordered" evidence="2">
    <location>
        <begin position="790"/>
        <end position="828"/>
    </location>
</feature>
<feature type="region of interest" description="Disordered" evidence="2">
    <location>
        <begin position="841"/>
        <end position="860"/>
    </location>
</feature>
<feature type="region of interest" description="Disordered" evidence="2">
    <location>
        <begin position="991"/>
        <end position="1132"/>
    </location>
</feature>
<feature type="region of interest" description="Necessary for spindle and spindle pole localization">
    <location>
        <begin position="1076"/>
        <end position="1265"/>
    </location>
</feature>
<feature type="region of interest" description="Disordered" evidence="2">
    <location>
        <begin position="1267"/>
        <end position="1289"/>
    </location>
</feature>
<feature type="region of interest" description="Disordered" evidence="2">
    <location>
        <begin position="1355"/>
        <end position="1379"/>
    </location>
</feature>
<feature type="region of interest" description="Necessary for nuclear membrane localization">
    <location>
        <begin position="1388"/>
        <end position="1447"/>
    </location>
</feature>
<feature type="coiled-coil region" evidence="1">
    <location>
        <begin position="354"/>
        <end position="518"/>
    </location>
</feature>
<feature type="coiled-coil region" evidence="1">
    <location>
        <begin position="665"/>
        <end position="731"/>
    </location>
</feature>
<feature type="compositionally biased region" description="Polar residues" evidence="2">
    <location>
        <begin position="71"/>
        <end position="92"/>
    </location>
</feature>
<feature type="compositionally biased region" description="Low complexity" evidence="2">
    <location>
        <begin position="420"/>
        <end position="436"/>
    </location>
</feature>
<feature type="compositionally biased region" description="Basic and acidic residues" evidence="2">
    <location>
        <begin position="800"/>
        <end position="812"/>
    </location>
</feature>
<feature type="compositionally biased region" description="Polar residues" evidence="2">
    <location>
        <begin position="1021"/>
        <end position="1035"/>
    </location>
</feature>
<feature type="compositionally biased region" description="Basic and acidic residues" evidence="2">
    <location>
        <begin position="1037"/>
        <end position="1049"/>
    </location>
</feature>
<feature type="compositionally biased region" description="Basic and acidic residues" evidence="2">
    <location>
        <begin position="1080"/>
        <end position="1096"/>
    </location>
</feature>
<feature type="compositionally biased region" description="Polar residues" evidence="2">
    <location>
        <begin position="1110"/>
        <end position="1119"/>
    </location>
</feature>
<feature type="compositionally biased region" description="Basic and acidic residues" evidence="2">
    <location>
        <begin position="1120"/>
        <end position="1132"/>
    </location>
</feature>
<feature type="compositionally biased region" description="Polar residues" evidence="2">
    <location>
        <begin position="1359"/>
        <end position="1371"/>
    </location>
</feature>
<feature type="splice variant" id="VSP_053666" description="In isoform 2." evidence="5">
    <original>WNMAAKRPPLKRFVSSGTWADIDEPTLMNS</original>
    <variation>C</variation>
    <location>
        <begin position="1333"/>
        <end position="1362"/>
    </location>
</feature>
<comment type="function">
    <text evidence="3 4">A maternally expressed membrane and cytoskeletal linker protein, which is essential for attachment of the centrosome to the male pronucleus. Promotes male and female pronucleus congression and subsequent fusion after fertilization. Congression is mediated by the sperm aster microtubules.</text>
</comment>
<comment type="subcellular location">
    <subcellularLocation>
        <location evidence="4">Endoplasmic reticulum membrane</location>
        <topology evidence="4">Single-pass type IV membrane protein</topology>
    </subcellularLocation>
    <subcellularLocation>
        <location evidence="4">Nucleus envelope</location>
    </subcellularLocation>
    <subcellularLocation>
        <location evidence="4">Cytoplasm</location>
        <location evidence="4">Cytoskeleton</location>
        <location evidence="4">Microtubule organizing center</location>
        <location evidence="4">Centrosome</location>
    </subcellularLocation>
    <subcellularLocation>
        <location evidence="4">Cytoplasm</location>
        <location evidence="4">Cytoskeleton</location>
        <location evidence="4">Spindle pole</location>
    </subcellularLocation>
    <subcellularLocation>
        <location evidence="4">Chromosome</location>
    </subcellularLocation>
    <text>Localized at both male and female pronuclear membranes during pronuclear congression and fusion. Colocalized with tubulin at the centrosome adjacent to the nuclear membrane. At prophase is localized at the centrosome on opposite sides of the zygotic nucleus and at the reforming nuclear membrane. At metaphase is juxtaposed with the centrosomes at the mitotic spindle poles. During chromosome segregation is localized with the chromatin. Undetectable at the centrosome at the onset of anaphase, but becomes again apparent by late mitosis.</text>
</comment>
<comment type="alternative products">
    <event type="alternative splicing"/>
    <isoform>
        <id>Q5RHB5-1</id>
        <name>1</name>
        <name>Lymphoid-restricted membrane protein maternal long form</name>
        <name>lrmp+EX36</name>
        <sequence type="displayed"/>
    </isoform>
    <isoform>
        <id>Q5RHB5-2</id>
        <name>2</name>
        <name>Lymphoid-restricted membrane protein maternal short form</name>
        <name>lrmp-EX36</name>
        <sequence type="described" ref="VSP_053666"/>
    </isoform>
</comment>
<comment type="developmental stage">
    <text evidence="4">Expressed in embryos and early cleavage stages (at protein level). Maternally expressed. Expressed in early cleavage embryos, weakly at 4 hours post-fertilization (hpf) and undetected at 24 hpf.</text>
</comment>
<comment type="disease">
    <text evidence="3">Defects in irag2 are a cause of pronuclear congression/fusion and chromosomal segregation abnormalities in the zygote named futile cycle (fue), a lethal recessive maternal-effect mutant. Mutant embryos undergo several cycles of anucleate cleavage and die.</text>
</comment>
<comment type="similarity">
    <text evidence="6">Belongs to the IRAG2 family.</text>
</comment>
<dbReference type="EMBL" id="JX297440">
    <property type="protein sequence ID" value="AFS18272.1"/>
    <property type="molecule type" value="mRNA"/>
</dbReference>
<dbReference type="EMBL" id="JX297441">
    <property type="protein sequence ID" value="AFS18273.1"/>
    <property type="molecule type" value="mRNA"/>
</dbReference>
<dbReference type="EMBL" id="BX547928">
    <property type="status" value="NOT_ANNOTATED_CDS"/>
    <property type="molecule type" value="Genomic_DNA"/>
</dbReference>
<dbReference type="RefSeq" id="NP_001333212.1">
    <molecule id="Q5RHB5-2"/>
    <property type="nucleotide sequence ID" value="NM_001346283.1"/>
</dbReference>
<dbReference type="RefSeq" id="NP_001333213.1">
    <molecule id="Q5RHB5-1"/>
    <property type="nucleotide sequence ID" value="NM_001346284.1"/>
</dbReference>
<dbReference type="RefSeq" id="XP_009298592.1">
    <molecule id="Q5RHB5-1"/>
    <property type="nucleotide sequence ID" value="XM_009300317.2"/>
</dbReference>
<dbReference type="RefSeq" id="XP_009298593.1">
    <molecule id="Q5RHB5-2"/>
    <property type="nucleotide sequence ID" value="XM_009300318.2"/>
</dbReference>
<dbReference type="SMR" id="Q5RHB5"/>
<dbReference type="STRING" id="7955.ENSDARP00000118448"/>
<dbReference type="PaxDb" id="7955-ENSDARP00000118448"/>
<dbReference type="Ensembl" id="ENSDART00000135730">
    <molecule id="Q5RHB5-1"/>
    <property type="protein sequence ID" value="ENSDARP00000118448"/>
    <property type="gene ID" value="ENSDARG00000045574"/>
</dbReference>
<dbReference type="GeneID" id="567234"/>
<dbReference type="KEGG" id="dre:567234"/>
<dbReference type="AGR" id="ZFIN:ZDB-GENE-041210-152"/>
<dbReference type="CTD" id="567234"/>
<dbReference type="ZFIN" id="ZDB-GENE-041210-152">
    <property type="gene designation" value="lrmp"/>
</dbReference>
<dbReference type="eggNOG" id="ENOG502QTH4">
    <property type="taxonomic scope" value="Eukaryota"/>
</dbReference>
<dbReference type="HOGENOM" id="CLU_004927_0_0_1"/>
<dbReference type="InParanoid" id="Q5RHB5"/>
<dbReference type="OMA" id="EWMAYCG"/>
<dbReference type="OrthoDB" id="10062605at2759"/>
<dbReference type="PhylomeDB" id="Q5RHB5"/>
<dbReference type="TreeFam" id="TF331789"/>
<dbReference type="PRO" id="PR:Q5RHB5"/>
<dbReference type="Proteomes" id="UP000000437">
    <property type="component" value="Chromosome 4"/>
</dbReference>
<dbReference type="Bgee" id="ENSDARG00000045574">
    <property type="expression patterns" value="Expressed in mature ovarian follicle and 22 other cell types or tissues"/>
</dbReference>
<dbReference type="ExpressionAtlas" id="Q5RHB5">
    <property type="expression patterns" value="baseline and differential"/>
</dbReference>
<dbReference type="GO" id="GO:0005813">
    <property type="term" value="C:centrosome"/>
    <property type="evidence" value="ECO:0000314"/>
    <property type="project" value="UniProtKB"/>
</dbReference>
<dbReference type="GO" id="GO:0000785">
    <property type="term" value="C:chromatin"/>
    <property type="evidence" value="ECO:0000314"/>
    <property type="project" value="UniProtKB"/>
</dbReference>
<dbReference type="GO" id="GO:0005789">
    <property type="term" value="C:endoplasmic reticulum membrane"/>
    <property type="evidence" value="ECO:0000314"/>
    <property type="project" value="UniProtKB"/>
</dbReference>
<dbReference type="GO" id="GO:0072686">
    <property type="term" value="C:mitotic spindle"/>
    <property type="evidence" value="ECO:0000314"/>
    <property type="project" value="UniProtKB"/>
</dbReference>
<dbReference type="GO" id="GO:0097431">
    <property type="term" value="C:mitotic spindle pole"/>
    <property type="evidence" value="ECO:0000314"/>
    <property type="project" value="UniProtKB"/>
</dbReference>
<dbReference type="GO" id="GO:0031965">
    <property type="term" value="C:nuclear membrane"/>
    <property type="evidence" value="ECO:0000314"/>
    <property type="project" value="UniProtKB"/>
</dbReference>
<dbReference type="GO" id="GO:0007052">
    <property type="term" value="P:mitotic spindle organization"/>
    <property type="evidence" value="ECO:0000315"/>
    <property type="project" value="UniProtKB"/>
</dbReference>
<dbReference type="GO" id="GO:0051028">
    <property type="term" value="P:mRNA transport"/>
    <property type="evidence" value="ECO:0000315"/>
    <property type="project" value="UniProtKB"/>
</dbReference>
<dbReference type="GO" id="GO:0051984">
    <property type="term" value="P:positive regulation of chromosome segregation"/>
    <property type="evidence" value="ECO:0000314"/>
    <property type="project" value="UniProtKB"/>
</dbReference>
<dbReference type="GO" id="GO:0007344">
    <property type="term" value="P:pronuclear fusion"/>
    <property type="evidence" value="ECO:0000314"/>
    <property type="project" value="UniProtKB"/>
</dbReference>
<dbReference type="GO" id="GO:0035046">
    <property type="term" value="P:pronuclear migration"/>
    <property type="evidence" value="ECO:0000314"/>
    <property type="project" value="UniProtKB"/>
</dbReference>
<dbReference type="InterPro" id="IPR028168">
    <property type="entry name" value="KASH5_coiled-coil"/>
</dbReference>
<dbReference type="InterPro" id="IPR039508">
    <property type="entry name" value="KASH5_EF-hand-like_dom"/>
</dbReference>
<dbReference type="InterPro" id="IPR008677">
    <property type="entry name" value="MRVI1"/>
</dbReference>
<dbReference type="PANTHER" id="PTHR15352:SF3">
    <property type="entry name" value="INOSITOL 1,4,5-TRIPHOSPHATE RECEPTOR ASSOCIATED 2"/>
    <property type="match status" value="1"/>
</dbReference>
<dbReference type="PANTHER" id="PTHR15352">
    <property type="entry name" value="LYMPHOID-RESTRICTED MEMBRANE PROTEIN, JAW1"/>
    <property type="match status" value="1"/>
</dbReference>
<dbReference type="Pfam" id="PF14658">
    <property type="entry name" value="EF-hand_9"/>
    <property type="match status" value="1"/>
</dbReference>
<dbReference type="Pfam" id="PF14662">
    <property type="entry name" value="KASH_CCD"/>
    <property type="match status" value="1"/>
</dbReference>
<dbReference type="Pfam" id="PF05781">
    <property type="entry name" value="MRVI1"/>
    <property type="match status" value="2"/>
</dbReference>